<proteinExistence type="inferred from homology"/>
<protein>
    <recommendedName>
        <fullName evidence="1">Lipoprotein-releasing system ATP-binding protein LolD</fullName>
        <ecNumber evidence="1">7.6.2.-</ecNumber>
    </recommendedName>
</protein>
<organism>
    <name type="scientific">Roseobacter denitrificans (strain ATCC 33942 / OCh 114)</name>
    <name type="common">Erythrobacter sp. (strain OCh 114)</name>
    <name type="synonym">Roseobacter denitrificans</name>
    <dbReference type="NCBI Taxonomy" id="375451"/>
    <lineage>
        <taxon>Bacteria</taxon>
        <taxon>Pseudomonadati</taxon>
        <taxon>Pseudomonadota</taxon>
        <taxon>Alphaproteobacteria</taxon>
        <taxon>Rhodobacterales</taxon>
        <taxon>Roseobacteraceae</taxon>
        <taxon>Roseobacter</taxon>
    </lineage>
</organism>
<sequence length="227" mass="23837">MSNPILEMRGITKSYNAGQANAVTVLRGVDLRIAKGEVVALVAPSGAGKSTLLHIAGLLDEADTGQVLIEGEEMRGLSDARRTAIRRSDVGFIYQFHHLLPEFNAAENIILPQLANGVSKAAAAERAAGLLSAVGIASRAAHRPGALSGGEQQRVAFCRALANAPKMLLADEPTGNLDPGTSDQVFDALMNLVRDTGLSALIATHNLALAARMDRQIRLDAGQLSDV</sequence>
<reference key="1">
    <citation type="journal article" date="2007" name="J. Bacteriol.">
        <title>The complete genome sequence of Roseobacter denitrificans reveals a mixotrophic rather than photosynthetic metabolism.</title>
        <authorList>
            <person name="Swingley W.D."/>
            <person name="Sadekar S."/>
            <person name="Mastrian S.D."/>
            <person name="Matthies H.J."/>
            <person name="Hao J."/>
            <person name="Ramos H."/>
            <person name="Acharya C.R."/>
            <person name="Conrad A.L."/>
            <person name="Taylor H.L."/>
            <person name="Dejesa L.C."/>
            <person name="Shah M.K."/>
            <person name="O'Huallachain M.E."/>
            <person name="Lince M.T."/>
            <person name="Blankenship R.E."/>
            <person name="Beatty J.T."/>
            <person name="Touchman J.W."/>
        </authorList>
    </citation>
    <scope>NUCLEOTIDE SEQUENCE [LARGE SCALE GENOMIC DNA]</scope>
    <source>
        <strain>ATCC 33942 / OCh 114</strain>
    </source>
</reference>
<evidence type="ECO:0000255" key="1">
    <source>
        <dbReference type="HAMAP-Rule" id="MF_01708"/>
    </source>
</evidence>
<feature type="chain" id="PRO_0000272144" description="Lipoprotein-releasing system ATP-binding protein LolD">
    <location>
        <begin position="1"/>
        <end position="227"/>
    </location>
</feature>
<feature type="domain" description="ABC transporter" evidence="1">
    <location>
        <begin position="6"/>
        <end position="227"/>
    </location>
</feature>
<feature type="binding site" evidence="1">
    <location>
        <begin position="43"/>
        <end position="50"/>
    </location>
    <ligand>
        <name>ATP</name>
        <dbReference type="ChEBI" id="CHEBI:30616"/>
    </ligand>
</feature>
<dbReference type="EC" id="7.6.2.-" evidence="1"/>
<dbReference type="EMBL" id="CP000362">
    <property type="protein sequence ID" value="ABG31650.1"/>
    <property type="molecule type" value="Genomic_DNA"/>
</dbReference>
<dbReference type="RefSeq" id="WP_011568267.1">
    <property type="nucleotide sequence ID" value="NC_008209.1"/>
</dbReference>
<dbReference type="SMR" id="Q168E3"/>
<dbReference type="STRING" id="375451.RD1_2048"/>
<dbReference type="KEGG" id="rde:RD1_2048"/>
<dbReference type="eggNOG" id="COG1136">
    <property type="taxonomic scope" value="Bacteria"/>
</dbReference>
<dbReference type="HOGENOM" id="CLU_000604_1_22_5"/>
<dbReference type="OrthoDB" id="9787227at2"/>
<dbReference type="Proteomes" id="UP000007029">
    <property type="component" value="Chromosome"/>
</dbReference>
<dbReference type="GO" id="GO:0005886">
    <property type="term" value="C:plasma membrane"/>
    <property type="evidence" value="ECO:0007669"/>
    <property type="project" value="UniProtKB-SubCell"/>
</dbReference>
<dbReference type="GO" id="GO:0005524">
    <property type="term" value="F:ATP binding"/>
    <property type="evidence" value="ECO:0007669"/>
    <property type="project" value="UniProtKB-KW"/>
</dbReference>
<dbReference type="GO" id="GO:0016887">
    <property type="term" value="F:ATP hydrolysis activity"/>
    <property type="evidence" value="ECO:0007669"/>
    <property type="project" value="InterPro"/>
</dbReference>
<dbReference type="GO" id="GO:0022857">
    <property type="term" value="F:transmembrane transporter activity"/>
    <property type="evidence" value="ECO:0007669"/>
    <property type="project" value="TreeGrafter"/>
</dbReference>
<dbReference type="GO" id="GO:0044874">
    <property type="term" value="P:lipoprotein localization to outer membrane"/>
    <property type="evidence" value="ECO:0007669"/>
    <property type="project" value="TreeGrafter"/>
</dbReference>
<dbReference type="GO" id="GO:0089705">
    <property type="term" value="P:protein localization to outer membrane"/>
    <property type="evidence" value="ECO:0007669"/>
    <property type="project" value="TreeGrafter"/>
</dbReference>
<dbReference type="CDD" id="cd03255">
    <property type="entry name" value="ABC_MJ0796_LolCDE_FtsE"/>
    <property type="match status" value="1"/>
</dbReference>
<dbReference type="FunFam" id="3.40.50.300:FF:000032">
    <property type="entry name" value="Export ABC transporter ATP-binding protein"/>
    <property type="match status" value="1"/>
</dbReference>
<dbReference type="Gene3D" id="3.40.50.300">
    <property type="entry name" value="P-loop containing nucleotide triphosphate hydrolases"/>
    <property type="match status" value="1"/>
</dbReference>
<dbReference type="InterPro" id="IPR003593">
    <property type="entry name" value="AAA+_ATPase"/>
</dbReference>
<dbReference type="InterPro" id="IPR003439">
    <property type="entry name" value="ABC_transporter-like_ATP-bd"/>
</dbReference>
<dbReference type="InterPro" id="IPR017871">
    <property type="entry name" value="ABC_transporter-like_CS"/>
</dbReference>
<dbReference type="InterPro" id="IPR015854">
    <property type="entry name" value="ABC_transpr_LolD-like"/>
</dbReference>
<dbReference type="InterPro" id="IPR017911">
    <property type="entry name" value="MacB-like_ATP-bd"/>
</dbReference>
<dbReference type="InterPro" id="IPR027417">
    <property type="entry name" value="P-loop_NTPase"/>
</dbReference>
<dbReference type="PANTHER" id="PTHR24220">
    <property type="entry name" value="IMPORT ATP-BINDING PROTEIN"/>
    <property type="match status" value="1"/>
</dbReference>
<dbReference type="PANTHER" id="PTHR24220:SF689">
    <property type="entry name" value="LIPOPROTEIN-RELEASING SYSTEM ATP-BINDING PROTEIN LOLD"/>
    <property type="match status" value="1"/>
</dbReference>
<dbReference type="Pfam" id="PF00005">
    <property type="entry name" value="ABC_tran"/>
    <property type="match status" value="1"/>
</dbReference>
<dbReference type="SMART" id="SM00382">
    <property type="entry name" value="AAA"/>
    <property type="match status" value="1"/>
</dbReference>
<dbReference type="SUPFAM" id="SSF52540">
    <property type="entry name" value="P-loop containing nucleoside triphosphate hydrolases"/>
    <property type="match status" value="1"/>
</dbReference>
<dbReference type="PROSITE" id="PS00211">
    <property type="entry name" value="ABC_TRANSPORTER_1"/>
    <property type="match status" value="1"/>
</dbReference>
<dbReference type="PROSITE" id="PS50893">
    <property type="entry name" value="ABC_TRANSPORTER_2"/>
    <property type="match status" value="1"/>
</dbReference>
<dbReference type="PROSITE" id="PS51244">
    <property type="entry name" value="LOLD"/>
    <property type="match status" value="1"/>
</dbReference>
<comment type="function">
    <text evidence="1">Part of the ABC transporter complex LolCDE involved in the translocation of mature outer membrane-directed lipoproteins, from the inner membrane to the periplasmic chaperone, LolA. Responsible for the formation of the LolA-lipoprotein complex in an ATP-dependent manner.</text>
</comment>
<comment type="subunit">
    <text evidence="1">The complex is composed of two ATP-binding proteins (LolD) and two transmembrane proteins (LolC and LolE).</text>
</comment>
<comment type="subcellular location">
    <subcellularLocation>
        <location evidence="1">Cell inner membrane</location>
        <topology evidence="1">Peripheral membrane protein</topology>
    </subcellularLocation>
</comment>
<comment type="similarity">
    <text evidence="1">Belongs to the ABC transporter superfamily. Lipoprotein translocase (TC 3.A.1.125) family.</text>
</comment>
<accession>Q168E3</accession>
<gene>
    <name evidence="1" type="primary">lolD</name>
    <name type="ordered locus">RD1_2048</name>
</gene>
<keyword id="KW-0067">ATP-binding</keyword>
<keyword id="KW-0997">Cell inner membrane</keyword>
<keyword id="KW-1003">Cell membrane</keyword>
<keyword id="KW-0472">Membrane</keyword>
<keyword id="KW-0547">Nucleotide-binding</keyword>
<keyword id="KW-1185">Reference proteome</keyword>
<keyword id="KW-1278">Translocase</keyword>
<keyword id="KW-0813">Transport</keyword>
<name>LOLD_ROSDO</name>